<gene>
    <name evidence="1" type="primary">atpG</name>
    <name type="ordered locus">LSEI_1165</name>
</gene>
<protein>
    <recommendedName>
        <fullName evidence="1">ATP synthase gamma chain</fullName>
    </recommendedName>
    <alternativeName>
        <fullName evidence="1">ATP synthase F1 sector gamma subunit</fullName>
    </alternativeName>
    <alternativeName>
        <fullName evidence="1">F-ATPase gamma subunit</fullName>
    </alternativeName>
</protein>
<keyword id="KW-0066">ATP synthesis</keyword>
<keyword id="KW-1003">Cell membrane</keyword>
<keyword id="KW-0139">CF(1)</keyword>
<keyword id="KW-0375">Hydrogen ion transport</keyword>
<keyword id="KW-0406">Ion transport</keyword>
<keyword id="KW-0472">Membrane</keyword>
<keyword id="KW-1185">Reference proteome</keyword>
<keyword id="KW-0813">Transport</keyword>
<proteinExistence type="inferred from homology"/>
<sequence length="308" mass="33723">MAESLMDIKRKIASTKKTGQITQAMQMVSGAKLSQIEKRAKKYQIYSDKVRQIVTHLAAGQLLELANAAESDTDSGDKSQVISVASLLQKRPVKKTGYLVITSDRGLVGSYNSTVLKAMMQMIKDDHESPDDYVMMAIGGVGADFFKARGLNLAYEYRGVSDIPTFNEVREIVKTAVTMFDNGVFDELYVCYNHHVNTLTSAFRAEKMLPISDLDVSEVADTNVEYLIEPDLDSVLESILPQYAESLIFGAIMDAKTAEHAASTTAMRSATDNANDLISHLSTQYNRARQAAITTEITEIVGGAAALE</sequence>
<dbReference type="EMBL" id="CP000423">
    <property type="protein sequence ID" value="ABJ69953.1"/>
    <property type="molecule type" value="Genomic_DNA"/>
</dbReference>
<dbReference type="RefSeq" id="WP_011674410.1">
    <property type="nucleotide sequence ID" value="NC_008526.1"/>
</dbReference>
<dbReference type="RefSeq" id="YP_806395.1">
    <property type="nucleotide sequence ID" value="NC_008526.1"/>
</dbReference>
<dbReference type="SMR" id="Q03A19"/>
<dbReference type="STRING" id="321967.LSEI_1165"/>
<dbReference type="PaxDb" id="321967-LSEI_1165"/>
<dbReference type="KEGG" id="lca:LSEI_1165"/>
<dbReference type="PATRIC" id="fig|321967.11.peg.1138"/>
<dbReference type="HOGENOM" id="CLU_050669_0_1_9"/>
<dbReference type="Proteomes" id="UP000001651">
    <property type="component" value="Chromosome"/>
</dbReference>
<dbReference type="GO" id="GO:0005886">
    <property type="term" value="C:plasma membrane"/>
    <property type="evidence" value="ECO:0007669"/>
    <property type="project" value="UniProtKB-SubCell"/>
</dbReference>
<dbReference type="GO" id="GO:0045259">
    <property type="term" value="C:proton-transporting ATP synthase complex"/>
    <property type="evidence" value="ECO:0007669"/>
    <property type="project" value="UniProtKB-KW"/>
</dbReference>
<dbReference type="GO" id="GO:0005524">
    <property type="term" value="F:ATP binding"/>
    <property type="evidence" value="ECO:0007669"/>
    <property type="project" value="UniProtKB-UniRule"/>
</dbReference>
<dbReference type="GO" id="GO:0046933">
    <property type="term" value="F:proton-transporting ATP synthase activity, rotational mechanism"/>
    <property type="evidence" value="ECO:0007669"/>
    <property type="project" value="UniProtKB-UniRule"/>
</dbReference>
<dbReference type="GO" id="GO:0042777">
    <property type="term" value="P:proton motive force-driven plasma membrane ATP synthesis"/>
    <property type="evidence" value="ECO:0007669"/>
    <property type="project" value="UniProtKB-UniRule"/>
</dbReference>
<dbReference type="CDD" id="cd12151">
    <property type="entry name" value="F1-ATPase_gamma"/>
    <property type="match status" value="1"/>
</dbReference>
<dbReference type="Gene3D" id="3.40.1380.10">
    <property type="match status" value="1"/>
</dbReference>
<dbReference type="Gene3D" id="1.10.287.80">
    <property type="entry name" value="ATP synthase, gamma subunit, helix hairpin domain"/>
    <property type="match status" value="1"/>
</dbReference>
<dbReference type="HAMAP" id="MF_00815">
    <property type="entry name" value="ATP_synth_gamma_bact"/>
    <property type="match status" value="1"/>
</dbReference>
<dbReference type="InterPro" id="IPR035968">
    <property type="entry name" value="ATP_synth_F1_ATPase_gsu"/>
</dbReference>
<dbReference type="InterPro" id="IPR000131">
    <property type="entry name" value="ATP_synth_F1_gsu"/>
</dbReference>
<dbReference type="InterPro" id="IPR023632">
    <property type="entry name" value="ATP_synth_F1_gsu_CS"/>
</dbReference>
<dbReference type="NCBIfam" id="TIGR01146">
    <property type="entry name" value="ATPsyn_F1gamma"/>
    <property type="match status" value="1"/>
</dbReference>
<dbReference type="NCBIfam" id="NF004147">
    <property type="entry name" value="PRK05621.2-1"/>
    <property type="match status" value="1"/>
</dbReference>
<dbReference type="PANTHER" id="PTHR11693">
    <property type="entry name" value="ATP SYNTHASE GAMMA CHAIN"/>
    <property type="match status" value="1"/>
</dbReference>
<dbReference type="PANTHER" id="PTHR11693:SF22">
    <property type="entry name" value="ATP SYNTHASE SUBUNIT GAMMA, MITOCHONDRIAL"/>
    <property type="match status" value="1"/>
</dbReference>
<dbReference type="Pfam" id="PF00231">
    <property type="entry name" value="ATP-synt"/>
    <property type="match status" value="1"/>
</dbReference>
<dbReference type="PRINTS" id="PR00126">
    <property type="entry name" value="ATPASEGAMMA"/>
</dbReference>
<dbReference type="SUPFAM" id="SSF52943">
    <property type="entry name" value="ATP synthase (F1-ATPase), gamma subunit"/>
    <property type="match status" value="1"/>
</dbReference>
<dbReference type="PROSITE" id="PS00153">
    <property type="entry name" value="ATPASE_GAMMA"/>
    <property type="match status" value="1"/>
</dbReference>
<comment type="function">
    <text evidence="1">Produces ATP from ADP in the presence of a proton gradient across the membrane. The gamma chain is believed to be important in regulating ATPase activity and the flow of protons through the CF(0) complex.</text>
</comment>
<comment type="subunit">
    <text evidence="1">F-type ATPases have 2 components, CF(1) - the catalytic core - and CF(0) - the membrane proton channel. CF(1) has five subunits: alpha(3), beta(3), gamma(1), delta(1), epsilon(1). CF(0) has three main subunits: a, b and c.</text>
</comment>
<comment type="subcellular location">
    <subcellularLocation>
        <location evidence="1">Cell membrane</location>
        <topology evidence="1">Peripheral membrane protein</topology>
    </subcellularLocation>
</comment>
<comment type="similarity">
    <text evidence="1">Belongs to the ATPase gamma chain family.</text>
</comment>
<accession>Q03A19</accession>
<organism>
    <name type="scientific">Lacticaseibacillus paracasei (strain ATCC 334 / BCRC 17002 / CCUG 31169 / CIP 107868 / KCTC 3260 / NRRL B-441)</name>
    <name type="common">Lactobacillus paracasei</name>
    <dbReference type="NCBI Taxonomy" id="321967"/>
    <lineage>
        <taxon>Bacteria</taxon>
        <taxon>Bacillati</taxon>
        <taxon>Bacillota</taxon>
        <taxon>Bacilli</taxon>
        <taxon>Lactobacillales</taxon>
        <taxon>Lactobacillaceae</taxon>
        <taxon>Lacticaseibacillus</taxon>
    </lineage>
</organism>
<reference key="1">
    <citation type="journal article" date="2006" name="Proc. Natl. Acad. Sci. U.S.A.">
        <title>Comparative genomics of the lactic acid bacteria.</title>
        <authorList>
            <person name="Makarova K.S."/>
            <person name="Slesarev A."/>
            <person name="Wolf Y.I."/>
            <person name="Sorokin A."/>
            <person name="Mirkin B."/>
            <person name="Koonin E.V."/>
            <person name="Pavlov A."/>
            <person name="Pavlova N."/>
            <person name="Karamychev V."/>
            <person name="Polouchine N."/>
            <person name="Shakhova V."/>
            <person name="Grigoriev I."/>
            <person name="Lou Y."/>
            <person name="Rohksar D."/>
            <person name="Lucas S."/>
            <person name="Huang K."/>
            <person name="Goodstein D.M."/>
            <person name="Hawkins T."/>
            <person name="Plengvidhya V."/>
            <person name="Welker D."/>
            <person name="Hughes J."/>
            <person name="Goh Y."/>
            <person name="Benson A."/>
            <person name="Baldwin K."/>
            <person name="Lee J.-H."/>
            <person name="Diaz-Muniz I."/>
            <person name="Dosti B."/>
            <person name="Smeianov V."/>
            <person name="Wechter W."/>
            <person name="Barabote R."/>
            <person name="Lorca G."/>
            <person name="Altermann E."/>
            <person name="Barrangou R."/>
            <person name="Ganesan B."/>
            <person name="Xie Y."/>
            <person name="Rawsthorne H."/>
            <person name="Tamir D."/>
            <person name="Parker C."/>
            <person name="Breidt F."/>
            <person name="Broadbent J.R."/>
            <person name="Hutkins R."/>
            <person name="O'Sullivan D."/>
            <person name="Steele J."/>
            <person name="Unlu G."/>
            <person name="Saier M.H. Jr."/>
            <person name="Klaenhammer T."/>
            <person name="Richardson P."/>
            <person name="Kozyavkin S."/>
            <person name="Weimer B.C."/>
            <person name="Mills D.A."/>
        </authorList>
    </citation>
    <scope>NUCLEOTIDE SEQUENCE [LARGE SCALE GENOMIC DNA]</scope>
    <source>
        <strain>ATCC 334 / BCRC 17002 / CCUG 31169 / CIP 107868 / KCTC 3260 / NRRL B-441</strain>
    </source>
</reference>
<name>ATPG_LACP3</name>
<feature type="chain" id="PRO_1000053234" description="ATP synthase gamma chain">
    <location>
        <begin position="1"/>
        <end position="308"/>
    </location>
</feature>
<evidence type="ECO:0000255" key="1">
    <source>
        <dbReference type="HAMAP-Rule" id="MF_00815"/>
    </source>
</evidence>